<name>FOLD_HELPH</name>
<dbReference type="EC" id="1.5.1.5" evidence="1"/>
<dbReference type="EC" id="3.5.4.9" evidence="1"/>
<dbReference type="EMBL" id="CP000241">
    <property type="protein sequence ID" value="ABF84623.1"/>
    <property type="status" value="ALT_INIT"/>
    <property type="molecule type" value="Genomic_DNA"/>
</dbReference>
<dbReference type="RefSeq" id="WP_162967062.1">
    <property type="nucleotide sequence ID" value="NC_008086.1"/>
</dbReference>
<dbReference type="SMR" id="Q1CTU9"/>
<dbReference type="KEGG" id="hpa:HPAG1_0556"/>
<dbReference type="HOGENOM" id="CLU_034045_2_1_7"/>
<dbReference type="UniPathway" id="UPA00193"/>
<dbReference type="GO" id="GO:0005829">
    <property type="term" value="C:cytosol"/>
    <property type="evidence" value="ECO:0007669"/>
    <property type="project" value="TreeGrafter"/>
</dbReference>
<dbReference type="GO" id="GO:0004477">
    <property type="term" value="F:methenyltetrahydrofolate cyclohydrolase activity"/>
    <property type="evidence" value="ECO:0007669"/>
    <property type="project" value="UniProtKB-UniRule"/>
</dbReference>
<dbReference type="GO" id="GO:0004488">
    <property type="term" value="F:methylenetetrahydrofolate dehydrogenase (NADP+) activity"/>
    <property type="evidence" value="ECO:0007669"/>
    <property type="project" value="UniProtKB-UniRule"/>
</dbReference>
<dbReference type="GO" id="GO:0000105">
    <property type="term" value="P:L-histidine biosynthetic process"/>
    <property type="evidence" value="ECO:0007669"/>
    <property type="project" value="UniProtKB-KW"/>
</dbReference>
<dbReference type="GO" id="GO:0009086">
    <property type="term" value="P:methionine biosynthetic process"/>
    <property type="evidence" value="ECO:0007669"/>
    <property type="project" value="UniProtKB-KW"/>
</dbReference>
<dbReference type="GO" id="GO:0006164">
    <property type="term" value="P:purine nucleotide biosynthetic process"/>
    <property type="evidence" value="ECO:0007669"/>
    <property type="project" value="UniProtKB-KW"/>
</dbReference>
<dbReference type="GO" id="GO:0035999">
    <property type="term" value="P:tetrahydrofolate interconversion"/>
    <property type="evidence" value="ECO:0007669"/>
    <property type="project" value="UniProtKB-UniRule"/>
</dbReference>
<dbReference type="CDD" id="cd01080">
    <property type="entry name" value="NAD_bind_m-THF_DH_Cyclohyd"/>
    <property type="match status" value="1"/>
</dbReference>
<dbReference type="FunFam" id="3.40.50.10860:FF:000001">
    <property type="entry name" value="Bifunctional protein FolD"/>
    <property type="match status" value="1"/>
</dbReference>
<dbReference type="FunFam" id="3.40.50.720:FF:000094">
    <property type="entry name" value="Bifunctional protein FolD"/>
    <property type="match status" value="1"/>
</dbReference>
<dbReference type="Gene3D" id="3.40.50.10860">
    <property type="entry name" value="Leucine Dehydrogenase, chain A, domain 1"/>
    <property type="match status" value="1"/>
</dbReference>
<dbReference type="Gene3D" id="3.40.50.720">
    <property type="entry name" value="NAD(P)-binding Rossmann-like Domain"/>
    <property type="match status" value="1"/>
</dbReference>
<dbReference type="HAMAP" id="MF_01576">
    <property type="entry name" value="THF_DHG_CYH"/>
    <property type="match status" value="1"/>
</dbReference>
<dbReference type="InterPro" id="IPR046346">
    <property type="entry name" value="Aminoacid_DH-like_N_sf"/>
</dbReference>
<dbReference type="InterPro" id="IPR036291">
    <property type="entry name" value="NAD(P)-bd_dom_sf"/>
</dbReference>
<dbReference type="InterPro" id="IPR000672">
    <property type="entry name" value="THF_DH/CycHdrlase"/>
</dbReference>
<dbReference type="InterPro" id="IPR020630">
    <property type="entry name" value="THF_DH/CycHdrlase_cat_dom"/>
</dbReference>
<dbReference type="InterPro" id="IPR020867">
    <property type="entry name" value="THF_DH/CycHdrlase_CS"/>
</dbReference>
<dbReference type="InterPro" id="IPR020631">
    <property type="entry name" value="THF_DH/CycHdrlase_NAD-bd_dom"/>
</dbReference>
<dbReference type="NCBIfam" id="NF008058">
    <property type="entry name" value="PRK10792.1"/>
    <property type="match status" value="1"/>
</dbReference>
<dbReference type="NCBIfam" id="NF010787">
    <property type="entry name" value="PRK14191.1"/>
    <property type="match status" value="1"/>
</dbReference>
<dbReference type="PANTHER" id="PTHR48099:SF5">
    <property type="entry name" value="C-1-TETRAHYDROFOLATE SYNTHASE, CYTOPLASMIC"/>
    <property type="match status" value="1"/>
</dbReference>
<dbReference type="PANTHER" id="PTHR48099">
    <property type="entry name" value="C-1-TETRAHYDROFOLATE SYNTHASE, CYTOPLASMIC-RELATED"/>
    <property type="match status" value="1"/>
</dbReference>
<dbReference type="Pfam" id="PF00763">
    <property type="entry name" value="THF_DHG_CYH"/>
    <property type="match status" value="1"/>
</dbReference>
<dbReference type="Pfam" id="PF02882">
    <property type="entry name" value="THF_DHG_CYH_C"/>
    <property type="match status" value="1"/>
</dbReference>
<dbReference type="PRINTS" id="PR00085">
    <property type="entry name" value="THFDHDRGNASE"/>
</dbReference>
<dbReference type="SUPFAM" id="SSF53223">
    <property type="entry name" value="Aminoacid dehydrogenase-like, N-terminal domain"/>
    <property type="match status" value="1"/>
</dbReference>
<dbReference type="SUPFAM" id="SSF51735">
    <property type="entry name" value="NAD(P)-binding Rossmann-fold domains"/>
    <property type="match status" value="1"/>
</dbReference>
<dbReference type="PROSITE" id="PS00766">
    <property type="entry name" value="THF_DHG_CYH_1"/>
    <property type="match status" value="1"/>
</dbReference>
<dbReference type="PROSITE" id="PS00767">
    <property type="entry name" value="THF_DHG_CYH_2"/>
    <property type="match status" value="1"/>
</dbReference>
<evidence type="ECO:0000255" key="1">
    <source>
        <dbReference type="HAMAP-Rule" id="MF_01576"/>
    </source>
</evidence>
<evidence type="ECO:0000305" key="2"/>
<proteinExistence type="inferred from homology"/>
<reference key="1">
    <citation type="journal article" date="2006" name="Proc. Natl. Acad. Sci. U.S.A.">
        <title>The complete genome sequence of a chronic atrophic gastritis Helicobacter pylori strain: evolution during disease progression.</title>
        <authorList>
            <person name="Oh J.D."/>
            <person name="Kling-Baeckhed H."/>
            <person name="Giannakis M."/>
            <person name="Xu J."/>
            <person name="Fulton R.S."/>
            <person name="Fulton L.A."/>
            <person name="Cordum H.S."/>
            <person name="Wang C."/>
            <person name="Elliott G."/>
            <person name="Edwards J."/>
            <person name="Mardis E.R."/>
            <person name="Engstrand L.G."/>
            <person name="Gordon J.I."/>
        </authorList>
    </citation>
    <scope>NUCLEOTIDE SEQUENCE [LARGE SCALE GENOMIC DNA]</scope>
    <source>
        <strain>HPAG1</strain>
    </source>
</reference>
<feature type="chain" id="PRO_0000268369" description="Bifunctional protein FolD">
    <location>
        <begin position="1"/>
        <end position="290"/>
    </location>
</feature>
<feature type="binding site" evidence="1">
    <location>
        <begin position="169"/>
        <end position="171"/>
    </location>
    <ligand>
        <name>NADP(+)</name>
        <dbReference type="ChEBI" id="CHEBI:58349"/>
    </ligand>
</feature>
<feature type="binding site" evidence="1">
    <location>
        <position position="194"/>
    </location>
    <ligand>
        <name>NADP(+)</name>
        <dbReference type="ChEBI" id="CHEBI:58349"/>
    </ligand>
</feature>
<feature type="binding site" evidence="1">
    <location>
        <position position="235"/>
    </location>
    <ligand>
        <name>NADP(+)</name>
        <dbReference type="ChEBI" id="CHEBI:58349"/>
    </ligand>
</feature>
<sequence length="290" mass="31616">MPNRGVVLLDGQALAYDIEKDLKNKIQTITAQTHKRPKLAVILVGKDPASITYVNMKIKACQRVGMDFDLKTLQEDITEAKLLSLIKDYNTDQNISGVLVQLPLPRHIDSKMVLEAIDPSKDVDGFHPLNIGKLCTQKESFLPATPMGVMRLLKHYHIEIKGKDVAIIGASNIIGKPLSMLMLNAGASVSVCHILTKDISFYTQNADIVCVGVGKPDLIKASMLKKGAVVVDIGINHLNDGRIVGDVDFNNAQKVAGFITPVPKGVGPMTIVSLLENTLIAFEKQQRKGF</sequence>
<protein>
    <recommendedName>
        <fullName evidence="1">Bifunctional protein FolD</fullName>
    </recommendedName>
    <domain>
        <recommendedName>
            <fullName evidence="1">Methylenetetrahydrofolate dehydrogenase</fullName>
            <ecNumber evidence="1">1.5.1.5</ecNumber>
        </recommendedName>
    </domain>
    <domain>
        <recommendedName>
            <fullName evidence="1">Methenyltetrahydrofolate cyclohydrolase</fullName>
            <ecNumber evidence="1">3.5.4.9</ecNumber>
        </recommendedName>
    </domain>
</protein>
<comment type="function">
    <text evidence="1">Catalyzes the oxidation of 5,10-methylenetetrahydrofolate to 5,10-methenyltetrahydrofolate and then the hydrolysis of 5,10-methenyltetrahydrofolate to 10-formyltetrahydrofolate.</text>
</comment>
<comment type="catalytic activity">
    <reaction evidence="1">
        <text>(6R)-5,10-methylene-5,6,7,8-tetrahydrofolate + NADP(+) = (6R)-5,10-methenyltetrahydrofolate + NADPH</text>
        <dbReference type="Rhea" id="RHEA:22812"/>
        <dbReference type="ChEBI" id="CHEBI:15636"/>
        <dbReference type="ChEBI" id="CHEBI:57455"/>
        <dbReference type="ChEBI" id="CHEBI:57783"/>
        <dbReference type="ChEBI" id="CHEBI:58349"/>
        <dbReference type="EC" id="1.5.1.5"/>
    </reaction>
</comment>
<comment type="catalytic activity">
    <reaction evidence="1">
        <text>(6R)-5,10-methenyltetrahydrofolate + H2O = (6R)-10-formyltetrahydrofolate + H(+)</text>
        <dbReference type="Rhea" id="RHEA:23700"/>
        <dbReference type="ChEBI" id="CHEBI:15377"/>
        <dbReference type="ChEBI" id="CHEBI:15378"/>
        <dbReference type="ChEBI" id="CHEBI:57455"/>
        <dbReference type="ChEBI" id="CHEBI:195366"/>
        <dbReference type="EC" id="3.5.4.9"/>
    </reaction>
</comment>
<comment type="pathway">
    <text evidence="1">One-carbon metabolism; tetrahydrofolate interconversion.</text>
</comment>
<comment type="subunit">
    <text evidence="1">Homodimer.</text>
</comment>
<comment type="similarity">
    <text evidence="1">Belongs to the tetrahydrofolate dehydrogenase/cyclohydrolase family.</text>
</comment>
<comment type="sequence caution" evidence="2">
    <conflict type="erroneous initiation">
        <sequence resource="EMBL-CDS" id="ABF84623"/>
    </conflict>
</comment>
<keyword id="KW-0028">Amino-acid biosynthesis</keyword>
<keyword id="KW-0368">Histidine biosynthesis</keyword>
<keyword id="KW-0378">Hydrolase</keyword>
<keyword id="KW-0486">Methionine biosynthesis</keyword>
<keyword id="KW-0511">Multifunctional enzyme</keyword>
<keyword id="KW-0521">NADP</keyword>
<keyword id="KW-0554">One-carbon metabolism</keyword>
<keyword id="KW-0560">Oxidoreductase</keyword>
<keyword id="KW-0658">Purine biosynthesis</keyword>
<accession>Q1CTU9</accession>
<organism>
    <name type="scientific">Helicobacter pylori (strain HPAG1)</name>
    <dbReference type="NCBI Taxonomy" id="357544"/>
    <lineage>
        <taxon>Bacteria</taxon>
        <taxon>Pseudomonadati</taxon>
        <taxon>Campylobacterota</taxon>
        <taxon>Epsilonproteobacteria</taxon>
        <taxon>Campylobacterales</taxon>
        <taxon>Helicobacteraceae</taxon>
        <taxon>Helicobacter</taxon>
    </lineage>
</organism>
<gene>
    <name evidence="1" type="primary">folD</name>
    <name type="ordered locus">HPAG1_0556</name>
</gene>